<protein>
    <recommendedName>
        <fullName evidence="1">Probable alpha-L-glutamate ligase</fullName>
        <ecNumber evidence="1">6.3.2.-</ecNumber>
    </recommendedName>
</protein>
<comment type="cofactor">
    <cofactor evidence="1">
        <name>Mg(2+)</name>
        <dbReference type="ChEBI" id="CHEBI:18420"/>
    </cofactor>
    <cofactor evidence="1">
        <name>Mn(2+)</name>
        <dbReference type="ChEBI" id="CHEBI:29035"/>
    </cofactor>
    <text evidence="1">Binds 2 magnesium or manganese ions per subunit.</text>
</comment>
<comment type="similarity">
    <text evidence="1">Belongs to the RimK family.</text>
</comment>
<organism>
    <name type="scientific">Xanthomonas oryzae pv. oryzae (strain MAFF 311018)</name>
    <dbReference type="NCBI Taxonomy" id="342109"/>
    <lineage>
        <taxon>Bacteria</taxon>
        <taxon>Pseudomonadati</taxon>
        <taxon>Pseudomonadota</taxon>
        <taxon>Gammaproteobacteria</taxon>
        <taxon>Lysobacterales</taxon>
        <taxon>Lysobacteraceae</taxon>
        <taxon>Xanthomonas</taxon>
    </lineage>
</organism>
<keyword id="KW-0067">ATP-binding</keyword>
<keyword id="KW-0436">Ligase</keyword>
<keyword id="KW-0460">Magnesium</keyword>
<keyword id="KW-0464">Manganese</keyword>
<keyword id="KW-0479">Metal-binding</keyword>
<keyword id="KW-0547">Nucleotide-binding</keyword>
<keyword id="KW-0648">Protein biosynthesis</keyword>
<dbReference type="EC" id="6.3.2.-" evidence="1"/>
<dbReference type="EMBL" id="AP008229">
    <property type="protein sequence ID" value="BAE67859.1"/>
    <property type="molecule type" value="Genomic_DNA"/>
</dbReference>
<dbReference type="SMR" id="Q2P6G8"/>
<dbReference type="KEGG" id="xom:XOO1104"/>
<dbReference type="HOGENOM" id="CLU_054353_0_1_6"/>
<dbReference type="GO" id="GO:0005737">
    <property type="term" value="C:cytoplasm"/>
    <property type="evidence" value="ECO:0007669"/>
    <property type="project" value="TreeGrafter"/>
</dbReference>
<dbReference type="GO" id="GO:0005524">
    <property type="term" value="F:ATP binding"/>
    <property type="evidence" value="ECO:0007669"/>
    <property type="project" value="UniProtKB-UniRule"/>
</dbReference>
<dbReference type="GO" id="GO:0046872">
    <property type="term" value="F:metal ion binding"/>
    <property type="evidence" value="ECO:0007669"/>
    <property type="project" value="UniProtKB-KW"/>
</dbReference>
<dbReference type="GO" id="GO:0018169">
    <property type="term" value="F:ribosomal S6-glutamic acid ligase activity"/>
    <property type="evidence" value="ECO:0007669"/>
    <property type="project" value="TreeGrafter"/>
</dbReference>
<dbReference type="GO" id="GO:0036211">
    <property type="term" value="P:protein modification process"/>
    <property type="evidence" value="ECO:0007669"/>
    <property type="project" value="InterPro"/>
</dbReference>
<dbReference type="GO" id="GO:0009432">
    <property type="term" value="P:SOS response"/>
    <property type="evidence" value="ECO:0007669"/>
    <property type="project" value="TreeGrafter"/>
</dbReference>
<dbReference type="GO" id="GO:0006412">
    <property type="term" value="P:translation"/>
    <property type="evidence" value="ECO:0007669"/>
    <property type="project" value="UniProtKB-KW"/>
</dbReference>
<dbReference type="FunFam" id="3.40.50.20:FF:000004">
    <property type="entry name" value="Probable alpha-L-glutamate ligase"/>
    <property type="match status" value="1"/>
</dbReference>
<dbReference type="FunFam" id="3.30.1490.20:FF:000005">
    <property type="entry name" value="Probable alpha-L-glutamate ligase 1"/>
    <property type="match status" value="1"/>
</dbReference>
<dbReference type="Gene3D" id="3.40.50.20">
    <property type="match status" value="1"/>
</dbReference>
<dbReference type="Gene3D" id="3.30.1490.20">
    <property type="entry name" value="ATP-grasp fold, A domain"/>
    <property type="match status" value="1"/>
</dbReference>
<dbReference type="Gene3D" id="3.30.470.20">
    <property type="entry name" value="ATP-grasp fold, B domain"/>
    <property type="match status" value="1"/>
</dbReference>
<dbReference type="HAMAP" id="MF_01552">
    <property type="entry name" value="RimK"/>
    <property type="match status" value="1"/>
</dbReference>
<dbReference type="InterPro" id="IPR011761">
    <property type="entry name" value="ATP-grasp"/>
</dbReference>
<dbReference type="InterPro" id="IPR013651">
    <property type="entry name" value="ATP-grasp_RimK-type"/>
</dbReference>
<dbReference type="InterPro" id="IPR013815">
    <property type="entry name" value="ATP_grasp_subdomain_1"/>
</dbReference>
<dbReference type="InterPro" id="IPR023533">
    <property type="entry name" value="RimK"/>
</dbReference>
<dbReference type="InterPro" id="IPR041107">
    <property type="entry name" value="Rimk_N"/>
</dbReference>
<dbReference type="InterPro" id="IPR004666">
    <property type="entry name" value="Rp_bS6_RimK/Lys_biosynth_LsyX"/>
</dbReference>
<dbReference type="NCBIfam" id="NF007764">
    <property type="entry name" value="PRK10446.1"/>
    <property type="match status" value="1"/>
</dbReference>
<dbReference type="NCBIfam" id="TIGR00768">
    <property type="entry name" value="rimK_fam"/>
    <property type="match status" value="1"/>
</dbReference>
<dbReference type="PANTHER" id="PTHR21621:SF7">
    <property type="entry name" value="RIBOSOMAL PROTEIN BS6--L-GLUTAMATE LIGASE"/>
    <property type="match status" value="1"/>
</dbReference>
<dbReference type="PANTHER" id="PTHR21621">
    <property type="entry name" value="RIBOSOMAL PROTEIN S6 MODIFICATION PROTEIN"/>
    <property type="match status" value="1"/>
</dbReference>
<dbReference type="Pfam" id="PF08443">
    <property type="entry name" value="RimK"/>
    <property type="match status" value="1"/>
</dbReference>
<dbReference type="Pfam" id="PF18030">
    <property type="entry name" value="Rimk_N"/>
    <property type="match status" value="1"/>
</dbReference>
<dbReference type="SUPFAM" id="SSF56059">
    <property type="entry name" value="Glutathione synthetase ATP-binding domain-like"/>
    <property type="match status" value="1"/>
</dbReference>
<dbReference type="PROSITE" id="PS50975">
    <property type="entry name" value="ATP_GRASP"/>
    <property type="match status" value="1"/>
</dbReference>
<feature type="chain" id="PRO_1000068862" description="Probable alpha-L-glutamate ligase">
    <location>
        <begin position="1"/>
        <end position="295"/>
    </location>
</feature>
<feature type="domain" description="ATP-grasp" evidence="1">
    <location>
        <begin position="104"/>
        <end position="287"/>
    </location>
</feature>
<feature type="binding site" evidence="1">
    <location>
        <position position="141"/>
    </location>
    <ligand>
        <name>ATP</name>
        <dbReference type="ChEBI" id="CHEBI:30616"/>
    </ligand>
</feature>
<feature type="binding site" evidence="1">
    <location>
        <begin position="178"/>
        <end position="179"/>
    </location>
    <ligand>
        <name>ATP</name>
        <dbReference type="ChEBI" id="CHEBI:30616"/>
    </ligand>
</feature>
<feature type="binding site" evidence="1">
    <location>
        <position position="187"/>
    </location>
    <ligand>
        <name>ATP</name>
        <dbReference type="ChEBI" id="CHEBI:30616"/>
    </ligand>
</feature>
<feature type="binding site" evidence="1">
    <location>
        <begin position="211"/>
        <end position="213"/>
    </location>
    <ligand>
        <name>ATP</name>
        <dbReference type="ChEBI" id="CHEBI:30616"/>
    </ligand>
</feature>
<feature type="binding site" evidence="1">
    <location>
        <position position="248"/>
    </location>
    <ligand>
        <name>Mg(2+)</name>
        <dbReference type="ChEBI" id="CHEBI:18420"/>
        <label>1</label>
    </ligand>
</feature>
<feature type="binding site" evidence="1">
    <location>
        <position position="248"/>
    </location>
    <ligand>
        <name>Mn(2+)</name>
        <dbReference type="ChEBI" id="CHEBI:29035"/>
        <label>1</label>
    </ligand>
</feature>
<feature type="binding site" evidence="1">
    <location>
        <position position="260"/>
    </location>
    <ligand>
        <name>Mg(2+)</name>
        <dbReference type="ChEBI" id="CHEBI:18420"/>
        <label>1</label>
    </ligand>
</feature>
<feature type="binding site" evidence="1">
    <location>
        <position position="260"/>
    </location>
    <ligand>
        <name>Mg(2+)</name>
        <dbReference type="ChEBI" id="CHEBI:18420"/>
        <label>2</label>
    </ligand>
</feature>
<feature type="binding site" evidence="1">
    <location>
        <position position="260"/>
    </location>
    <ligand>
        <name>Mn(2+)</name>
        <dbReference type="ChEBI" id="CHEBI:29035"/>
        <label>1</label>
    </ligand>
</feature>
<feature type="binding site" evidence="1">
    <location>
        <position position="260"/>
    </location>
    <ligand>
        <name>Mn(2+)</name>
        <dbReference type="ChEBI" id="CHEBI:29035"/>
        <label>2</label>
    </ligand>
</feature>
<feature type="binding site" evidence="1">
    <location>
        <position position="262"/>
    </location>
    <ligand>
        <name>Mg(2+)</name>
        <dbReference type="ChEBI" id="CHEBI:18420"/>
        <label>2</label>
    </ligand>
</feature>
<feature type="binding site" evidence="1">
    <location>
        <position position="262"/>
    </location>
    <ligand>
        <name>Mn(2+)</name>
        <dbReference type="ChEBI" id="CHEBI:29035"/>
        <label>2</label>
    </ligand>
</feature>
<name>RIMK_XANOM</name>
<reference key="1">
    <citation type="journal article" date="2005" name="Jpn. Agric. Res. Q.">
        <title>Genome sequence of Xanthomonas oryzae pv. oryzae suggests contribution of large numbers of effector genes and insertion sequences to its race diversity.</title>
        <authorList>
            <person name="Ochiai H."/>
            <person name="Inoue Y."/>
            <person name="Takeya M."/>
            <person name="Sasaki A."/>
            <person name="Kaku H."/>
        </authorList>
    </citation>
    <scope>NUCLEOTIDE SEQUENCE [LARGE SCALE GENOMIC DNA]</scope>
    <source>
        <strain>MAFF 311018</strain>
    </source>
</reference>
<gene>
    <name evidence="1" type="primary">rimK</name>
    <name type="ordered locus">XOO1104</name>
</gene>
<proteinExistence type="inferred from homology"/>
<evidence type="ECO:0000255" key="1">
    <source>
        <dbReference type="HAMAP-Rule" id="MF_01552"/>
    </source>
</evidence>
<accession>Q2P6G8</accession>
<sequence length="295" mass="31676">MKIAILSRNSKLYSTRRLIEAGRKRGHTVRILDPLRCYMRIAADGFSLHYKGKPITGFDAVIPRIGASVTRYGTAVLRQLEFMGTYTPNPSDAILRARDKLRAHQLLAAQGIDMPVTVFGDNPDDTQDLLSMLGPPPHVVKLNEGAQGAGVILTEKASASRSVVEALRGLYANFIVQEFIGEAEGADLRCFVVGDRVVAAMRRQAAEGDFRSNLHLGGTAVVADATELEREVAVRSARALGLAVAGVDLIRSKRGPLVLEVNSTPGLEGVEGVCGVDVAGAIVQHLEQSVRRSAD</sequence>